<proteinExistence type="inferred from homology"/>
<dbReference type="EC" id="2.3.1.15" evidence="1"/>
<dbReference type="EMBL" id="CP001139">
    <property type="protein sequence ID" value="ACH67388.1"/>
    <property type="molecule type" value="Genomic_DNA"/>
</dbReference>
<dbReference type="RefSeq" id="WP_012534392.1">
    <property type="nucleotide sequence ID" value="NC_011184.1"/>
</dbReference>
<dbReference type="SMR" id="B5FCB3"/>
<dbReference type="KEGG" id="vfm:VFMJ11_2567"/>
<dbReference type="HOGENOM" id="CLU_015407_0_0_6"/>
<dbReference type="UniPathway" id="UPA00557">
    <property type="reaction ID" value="UER00612"/>
</dbReference>
<dbReference type="Proteomes" id="UP000001857">
    <property type="component" value="Chromosome I"/>
</dbReference>
<dbReference type="GO" id="GO:0005886">
    <property type="term" value="C:plasma membrane"/>
    <property type="evidence" value="ECO:0007669"/>
    <property type="project" value="UniProtKB-SubCell"/>
</dbReference>
<dbReference type="GO" id="GO:0004366">
    <property type="term" value="F:glycerol-3-phosphate O-acyltransferase activity"/>
    <property type="evidence" value="ECO:0007669"/>
    <property type="project" value="UniProtKB-UniRule"/>
</dbReference>
<dbReference type="GO" id="GO:0016024">
    <property type="term" value="P:CDP-diacylglycerol biosynthetic process"/>
    <property type="evidence" value="ECO:0007669"/>
    <property type="project" value="UniProtKB-UniRule"/>
</dbReference>
<dbReference type="GO" id="GO:0006631">
    <property type="term" value="P:fatty acid metabolic process"/>
    <property type="evidence" value="ECO:0007669"/>
    <property type="project" value="TreeGrafter"/>
</dbReference>
<dbReference type="CDD" id="cd07993">
    <property type="entry name" value="LPLAT_DHAPAT-like"/>
    <property type="match status" value="1"/>
</dbReference>
<dbReference type="HAMAP" id="MF_00393">
    <property type="entry name" value="Glyc3P_acyltrans"/>
    <property type="match status" value="1"/>
</dbReference>
<dbReference type="InterPro" id="IPR022284">
    <property type="entry name" value="GPAT/DHAPAT"/>
</dbReference>
<dbReference type="InterPro" id="IPR045520">
    <property type="entry name" value="GPAT/DHAPAT_C"/>
</dbReference>
<dbReference type="InterPro" id="IPR041728">
    <property type="entry name" value="GPAT/DHAPAT_LPLAT"/>
</dbReference>
<dbReference type="InterPro" id="IPR028354">
    <property type="entry name" value="GPAT_PlsB"/>
</dbReference>
<dbReference type="InterPro" id="IPR002123">
    <property type="entry name" value="Plipid/glycerol_acylTrfase"/>
</dbReference>
<dbReference type="NCBIfam" id="TIGR03703">
    <property type="entry name" value="plsB"/>
    <property type="match status" value="1"/>
</dbReference>
<dbReference type="NCBIfam" id="NF003441">
    <property type="entry name" value="PRK04974.1"/>
    <property type="match status" value="1"/>
</dbReference>
<dbReference type="PANTHER" id="PTHR12563:SF17">
    <property type="entry name" value="DIHYDROXYACETONE PHOSPHATE ACYLTRANSFERASE"/>
    <property type="match status" value="1"/>
</dbReference>
<dbReference type="PANTHER" id="PTHR12563">
    <property type="entry name" value="GLYCEROL-3-PHOSPHATE ACYLTRANSFERASE"/>
    <property type="match status" value="1"/>
</dbReference>
<dbReference type="Pfam" id="PF01553">
    <property type="entry name" value="Acyltransferase"/>
    <property type="match status" value="1"/>
</dbReference>
<dbReference type="Pfam" id="PF19277">
    <property type="entry name" value="GPAT_C"/>
    <property type="match status" value="1"/>
</dbReference>
<dbReference type="PIRSF" id="PIRSF500064">
    <property type="entry name" value="GPAT"/>
    <property type="match status" value="1"/>
</dbReference>
<dbReference type="PIRSF" id="PIRSF000437">
    <property type="entry name" value="GPAT_DHAPAT"/>
    <property type="match status" value="1"/>
</dbReference>
<dbReference type="SMART" id="SM00563">
    <property type="entry name" value="PlsC"/>
    <property type="match status" value="1"/>
</dbReference>
<dbReference type="SUPFAM" id="SSF69593">
    <property type="entry name" value="Glycerol-3-phosphate (1)-acyltransferase"/>
    <property type="match status" value="1"/>
</dbReference>
<comment type="catalytic activity">
    <reaction evidence="1">
        <text>sn-glycerol 3-phosphate + an acyl-CoA = a 1-acyl-sn-glycero-3-phosphate + CoA</text>
        <dbReference type="Rhea" id="RHEA:15325"/>
        <dbReference type="ChEBI" id="CHEBI:57287"/>
        <dbReference type="ChEBI" id="CHEBI:57597"/>
        <dbReference type="ChEBI" id="CHEBI:57970"/>
        <dbReference type="ChEBI" id="CHEBI:58342"/>
        <dbReference type="EC" id="2.3.1.15"/>
    </reaction>
</comment>
<comment type="pathway">
    <text evidence="1">Phospholipid metabolism; CDP-diacylglycerol biosynthesis; CDP-diacylglycerol from sn-glycerol 3-phosphate: step 1/3.</text>
</comment>
<comment type="subcellular location">
    <subcellularLocation>
        <location evidence="1">Cell inner membrane</location>
        <topology evidence="1">Peripheral membrane protein</topology>
        <orientation evidence="1">Cytoplasmic side</orientation>
    </subcellularLocation>
</comment>
<comment type="domain">
    <text evidence="1">The HXXXXD motif is essential for acyltransferase activity and may constitute the binding site for the phosphate moiety of the glycerol-3-phosphate.</text>
</comment>
<comment type="similarity">
    <text evidence="1">Belongs to the GPAT/DAPAT family.</text>
</comment>
<reference key="1">
    <citation type="submission" date="2008-08" db="EMBL/GenBank/DDBJ databases">
        <title>Complete sequence of Vibrio fischeri strain MJ11.</title>
        <authorList>
            <person name="Mandel M.J."/>
            <person name="Stabb E.V."/>
            <person name="Ruby E.G."/>
            <person name="Ferriera S."/>
            <person name="Johnson J."/>
            <person name="Kravitz S."/>
            <person name="Beeson K."/>
            <person name="Sutton G."/>
            <person name="Rogers Y.-H."/>
            <person name="Friedman R."/>
            <person name="Frazier M."/>
            <person name="Venter J.C."/>
        </authorList>
    </citation>
    <scope>NUCLEOTIDE SEQUENCE [LARGE SCALE GENOMIC DNA]</scope>
    <source>
        <strain>MJ11</strain>
    </source>
</reference>
<organism>
    <name type="scientific">Aliivibrio fischeri (strain MJ11)</name>
    <name type="common">Vibrio fischeri</name>
    <dbReference type="NCBI Taxonomy" id="388396"/>
    <lineage>
        <taxon>Bacteria</taxon>
        <taxon>Pseudomonadati</taxon>
        <taxon>Pseudomonadota</taxon>
        <taxon>Gammaproteobacteria</taxon>
        <taxon>Vibrionales</taxon>
        <taxon>Vibrionaceae</taxon>
        <taxon>Aliivibrio</taxon>
    </lineage>
</organism>
<name>PLSB_ALIFM</name>
<gene>
    <name evidence="1" type="primary">plsB</name>
    <name type="ordered locus">VFMJ11_2567</name>
</gene>
<feature type="chain" id="PRO_1000123100" description="Glycerol-3-phosphate acyltransferase">
    <location>
        <begin position="1"/>
        <end position="807"/>
    </location>
</feature>
<feature type="short sequence motif" description="HXXXXD motif">
    <location>
        <begin position="305"/>
        <end position="310"/>
    </location>
</feature>
<sequence>MSTGHTIYHSLLKLPLSVMVKSSSIPSNPIEDLNIDLERPIIYALPFRSHVDLLTLQKSALELGLPDPLSPIEIEGVKYPRYVFTSIGPKMFDTDDDLPQESLDLFKIVLKHHADNPDADFQLIPTSILWGRKPGKEGTSKPHLMPLNGPQKFVTLIKAGRDSTVRISPVVSLRYMADNHGSDEAIAHKLARVAKIHFSRQKLAASGPNLPNRQALFNRLLKSQAIEKVILEEAKSRNVDVEKVRKEAMGIMEEIATNFSYSLIKNGNRILKWLWNRLYQGLNINNASTVRKLAQEGHEIVYVPCHRSHMDYLLLSYVLYHEGLVPPHIAAGINLNFFPAGPIFRRGGAFFIRRSFKGNRLYSTIFREYLAELFAKGYSVEYFSEGGRSRTGRLLQAKTGMLAMTVQAMLRGLNRPVTLVPVYIGYEHVMEVTTYAKELRGKRKEKENAGQVLRTLRKLRNFGQGYVNFGEPISLNHYLNEHAPNWSESINPIEPQKPEWMTPVVNGIANKMMTHINDAAAANALTLCATALLAANQRALSKEDLTEQLDCYLQILRNVPYSATATVPSEDADALLEHAIKLDKFVIEKDTLGEIVSLDRNQSLLMTYYRNNIIHLFALPSLIAKLVVHHDTITVEQIQEQIKLIYPFLKAELFLHYEEDELASIVNNHIDELVQQNLILRDGDTLQLCNANIRKLHLLAHTISETLQRYAIALTHLQASPDLGKDELEEQSQIMAQRLSRLHGINAPEFFDKGVFCILFNTLKTEGYLDEDGAAVLSKVEPLSQDIAHLLTPEIKLTIHAVMTKED</sequence>
<keyword id="KW-0012">Acyltransferase</keyword>
<keyword id="KW-0997">Cell inner membrane</keyword>
<keyword id="KW-1003">Cell membrane</keyword>
<keyword id="KW-0444">Lipid biosynthesis</keyword>
<keyword id="KW-0443">Lipid metabolism</keyword>
<keyword id="KW-0472">Membrane</keyword>
<keyword id="KW-0594">Phospholipid biosynthesis</keyword>
<keyword id="KW-1208">Phospholipid metabolism</keyword>
<keyword id="KW-0808">Transferase</keyword>
<evidence type="ECO:0000255" key="1">
    <source>
        <dbReference type="HAMAP-Rule" id="MF_00393"/>
    </source>
</evidence>
<accession>B5FCB3</accession>
<protein>
    <recommendedName>
        <fullName evidence="1">Glycerol-3-phosphate acyltransferase</fullName>
        <shortName evidence="1">GPAT</shortName>
        <ecNumber evidence="1">2.3.1.15</ecNumber>
    </recommendedName>
</protein>